<evidence type="ECO:0000255" key="1">
    <source>
        <dbReference type="HAMAP-Rule" id="MF_01371"/>
    </source>
</evidence>
<evidence type="ECO:0000305" key="2"/>
<feature type="chain" id="PRO_0000347154" description="Large ribosomal subunit protein uL30">
    <location>
        <begin position="1"/>
        <end position="63"/>
    </location>
</feature>
<protein>
    <recommendedName>
        <fullName evidence="1">Large ribosomal subunit protein uL30</fullName>
    </recommendedName>
    <alternativeName>
        <fullName evidence="2">50S ribosomal protein L30</fullName>
    </alternativeName>
</protein>
<proteinExistence type="inferred from homology"/>
<accession>Q3BWW5</accession>
<comment type="subunit">
    <text evidence="1">Part of the 50S ribosomal subunit.</text>
</comment>
<comment type="similarity">
    <text evidence="1">Belongs to the universal ribosomal protein uL30 family.</text>
</comment>
<dbReference type="EMBL" id="AM039952">
    <property type="protein sequence ID" value="CAJ22648.1"/>
    <property type="molecule type" value="Genomic_DNA"/>
</dbReference>
<dbReference type="RefSeq" id="WP_003486678.1">
    <property type="nucleotide sequence ID" value="NZ_CP017190.1"/>
</dbReference>
<dbReference type="SMR" id="Q3BWW5"/>
<dbReference type="STRING" id="456327.BJD11_17650"/>
<dbReference type="GeneID" id="97509354"/>
<dbReference type="KEGG" id="xcv:XCV1017"/>
<dbReference type="eggNOG" id="COG1841">
    <property type="taxonomic scope" value="Bacteria"/>
</dbReference>
<dbReference type="HOGENOM" id="CLU_131047_1_4_6"/>
<dbReference type="Proteomes" id="UP000007069">
    <property type="component" value="Chromosome"/>
</dbReference>
<dbReference type="GO" id="GO:0022625">
    <property type="term" value="C:cytosolic large ribosomal subunit"/>
    <property type="evidence" value="ECO:0007669"/>
    <property type="project" value="TreeGrafter"/>
</dbReference>
<dbReference type="GO" id="GO:0003735">
    <property type="term" value="F:structural constituent of ribosome"/>
    <property type="evidence" value="ECO:0007669"/>
    <property type="project" value="InterPro"/>
</dbReference>
<dbReference type="GO" id="GO:0006412">
    <property type="term" value="P:translation"/>
    <property type="evidence" value="ECO:0007669"/>
    <property type="project" value="UniProtKB-UniRule"/>
</dbReference>
<dbReference type="CDD" id="cd00355">
    <property type="entry name" value="Ribosomal_L30_like"/>
    <property type="match status" value="1"/>
</dbReference>
<dbReference type="FunFam" id="3.30.1390.20:FF:000006">
    <property type="entry name" value="50S ribosomal protein L30"/>
    <property type="match status" value="1"/>
</dbReference>
<dbReference type="Gene3D" id="3.30.1390.20">
    <property type="entry name" value="Ribosomal protein L30, ferredoxin-like fold domain"/>
    <property type="match status" value="1"/>
</dbReference>
<dbReference type="HAMAP" id="MF_01371_B">
    <property type="entry name" value="Ribosomal_uL30_B"/>
    <property type="match status" value="1"/>
</dbReference>
<dbReference type="InterPro" id="IPR036919">
    <property type="entry name" value="Ribo_uL30_ferredoxin-like_sf"/>
</dbReference>
<dbReference type="InterPro" id="IPR005996">
    <property type="entry name" value="Ribosomal_uL30_bac-type"/>
</dbReference>
<dbReference type="InterPro" id="IPR016082">
    <property type="entry name" value="Ribosomal_uL30_ferredoxin-like"/>
</dbReference>
<dbReference type="NCBIfam" id="TIGR01308">
    <property type="entry name" value="rpmD_bact"/>
    <property type="match status" value="1"/>
</dbReference>
<dbReference type="PANTHER" id="PTHR15892:SF2">
    <property type="entry name" value="LARGE RIBOSOMAL SUBUNIT PROTEIN UL30M"/>
    <property type="match status" value="1"/>
</dbReference>
<dbReference type="PANTHER" id="PTHR15892">
    <property type="entry name" value="MITOCHONDRIAL RIBOSOMAL PROTEIN L30"/>
    <property type="match status" value="1"/>
</dbReference>
<dbReference type="Pfam" id="PF00327">
    <property type="entry name" value="Ribosomal_L30"/>
    <property type="match status" value="1"/>
</dbReference>
<dbReference type="PIRSF" id="PIRSF002211">
    <property type="entry name" value="Ribosomal_L30_bac-type"/>
    <property type="match status" value="1"/>
</dbReference>
<dbReference type="SUPFAM" id="SSF55129">
    <property type="entry name" value="Ribosomal protein L30p/L7e"/>
    <property type="match status" value="1"/>
</dbReference>
<reference key="1">
    <citation type="journal article" date="2005" name="J. Bacteriol.">
        <title>Insights into genome plasticity and pathogenicity of the plant pathogenic Bacterium Xanthomonas campestris pv. vesicatoria revealed by the complete genome sequence.</title>
        <authorList>
            <person name="Thieme F."/>
            <person name="Koebnik R."/>
            <person name="Bekel T."/>
            <person name="Berger C."/>
            <person name="Boch J."/>
            <person name="Buettner D."/>
            <person name="Caldana C."/>
            <person name="Gaigalat L."/>
            <person name="Goesmann A."/>
            <person name="Kay S."/>
            <person name="Kirchner O."/>
            <person name="Lanz C."/>
            <person name="Linke B."/>
            <person name="McHardy A.C."/>
            <person name="Meyer F."/>
            <person name="Mittenhuber G."/>
            <person name="Nies D.H."/>
            <person name="Niesbach-Kloesgen U."/>
            <person name="Patschkowski T."/>
            <person name="Rueckert C."/>
            <person name="Rupp O."/>
            <person name="Schneiker S."/>
            <person name="Schuster S.C."/>
            <person name="Vorhoelter F.J."/>
            <person name="Weber E."/>
            <person name="Puehler A."/>
            <person name="Bonas U."/>
            <person name="Bartels D."/>
            <person name="Kaiser O."/>
        </authorList>
    </citation>
    <scope>NUCLEOTIDE SEQUENCE [LARGE SCALE GENOMIC DNA]</scope>
    <source>
        <strain>85-10</strain>
    </source>
</reference>
<sequence length="63" mass="7207">MAKDTNKTVKVRLVRGLRGTQSRHRLSVRALGLNKLNDVRELKDSPQVRGLINTVHYLVKVEE</sequence>
<organism>
    <name type="scientific">Xanthomonas euvesicatoria pv. vesicatoria (strain 85-10)</name>
    <name type="common">Xanthomonas campestris pv. vesicatoria</name>
    <dbReference type="NCBI Taxonomy" id="316273"/>
    <lineage>
        <taxon>Bacteria</taxon>
        <taxon>Pseudomonadati</taxon>
        <taxon>Pseudomonadota</taxon>
        <taxon>Gammaproteobacteria</taxon>
        <taxon>Lysobacterales</taxon>
        <taxon>Lysobacteraceae</taxon>
        <taxon>Xanthomonas</taxon>
    </lineage>
</organism>
<name>RL30_XANE5</name>
<gene>
    <name evidence="1" type="primary">rpmD</name>
    <name type="ordered locus">XCV1017</name>
</gene>
<keyword id="KW-0687">Ribonucleoprotein</keyword>
<keyword id="KW-0689">Ribosomal protein</keyword>